<keyword id="KW-0249">Electron transport</keyword>
<keyword id="KW-0472">Membrane</keyword>
<keyword id="KW-0496">Mitochondrion</keyword>
<keyword id="KW-0999">Mitochondrion inner membrane</keyword>
<keyword id="KW-0520">NAD</keyword>
<keyword id="KW-0679">Respiratory chain</keyword>
<keyword id="KW-1278">Translocase</keyword>
<keyword id="KW-0812">Transmembrane</keyword>
<keyword id="KW-1133">Transmembrane helix</keyword>
<keyword id="KW-0813">Transport</keyword>
<keyword id="KW-0830">Ubiquinone</keyword>
<reference key="1">
    <citation type="journal article" date="1997" name="Mol. Biol. Evol.">
        <title>Phylogenetic analyses of mitochondrial DNA suggest a sister group relationship between Xenarthra (Edentata) and Ferungulates.</title>
        <authorList>
            <person name="Arnason U."/>
            <person name="Gullberg A."/>
            <person name="Janke A."/>
        </authorList>
    </citation>
    <scope>NUCLEOTIDE SEQUENCE [GENOMIC DNA]</scope>
</reference>
<dbReference type="EC" id="7.1.1.2" evidence="1"/>
<dbReference type="EMBL" id="Y11832">
    <property type="protein sequence ID" value="CAA72523.1"/>
    <property type="molecule type" value="Genomic_DNA"/>
</dbReference>
<dbReference type="PIR" id="T11448">
    <property type="entry name" value="T11448"/>
</dbReference>
<dbReference type="RefSeq" id="NP_007466.1">
    <property type="nucleotide sequence ID" value="NC_001821.1"/>
</dbReference>
<dbReference type="SMR" id="O21332"/>
<dbReference type="GeneID" id="808128"/>
<dbReference type="KEGG" id="dnm:808128"/>
<dbReference type="CTD" id="4537"/>
<dbReference type="HOGENOM" id="CLU_119549_3_1_1"/>
<dbReference type="OMA" id="GPRRYNR"/>
<dbReference type="GO" id="GO:0005743">
    <property type="term" value="C:mitochondrial inner membrane"/>
    <property type="evidence" value="ECO:0000250"/>
    <property type="project" value="UniProtKB"/>
</dbReference>
<dbReference type="GO" id="GO:0045271">
    <property type="term" value="C:respiratory chain complex I"/>
    <property type="evidence" value="ECO:0007669"/>
    <property type="project" value="Ensembl"/>
</dbReference>
<dbReference type="GO" id="GO:0008137">
    <property type="term" value="F:NADH dehydrogenase (ubiquinone) activity"/>
    <property type="evidence" value="ECO:0000250"/>
    <property type="project" value="UniProtKB"/>
</dbReference>
<dbReference type="GO" id="GO:0006120">
    <property type="term" value="P:mitochondrial electron transport, NADH to ubiquinone"/>
    <property type="evidence" value="ECO:0000250"/>
    <property type="project" value="UniProtKB"/>
</dbReference>
<dbReference type="FunFam" id="1.20.58.1610:FF:000004">
    <property type="entry name" value="NADH-quinone oxidoreductase subunit A"/>
    <property type="match status" value="1"/>
</dbReference>
<dbReference type="Gene3D" id="1.20.58.1610">
    <property type="entry name" value="NADH:ubiquinone/plastoquinone oxidoreductase, chain 3"/>
    <property type="match status" value="1"/>
</dbReference>
<dbReference type="InterPro" id="IPR000440">
    <property type="entry name" value="NADH_UbQ/plastoQ_OxRdtase_su3"/>
</dbReference>
<dbReference type="InterPro" id="IPR038430">
    <property type="entry name" value="NDAH_ubi_oxred_su3_sf"/>
</dbReference>
<dbReference type="PANTHER" id="PTHR11058">
    <property type="entry name" value="NADH-UBIQUINONE OXIDOREDUCTASE CHAIN 3"/>
    <property type="match status" value="1"/>
</dbReference>
<dbReference type="PANTHER" id="PTHR11058:SF9">
    <property type="entry name" value="NADH-UBIQUINONE OXIDOREDUCTASE CHAIN 3"/>
    <property type="match status" value="1"/>
</dbReference>
<dbReference type="Pfam" id="PF00507">
    <property type="entry name" value="Oxidored_q4"/>
    <property type="match status" value="1"/>
</dbReference>
<proteinExistence type="inferred from homology"/>
<geneLocation type="mitochondrion"/>
<sequence length="115" mass="13035">MNIMITLFINMSLASLLVLIAFWLPQLNTYTEKSSPYECGFDPMGSARLPFSMKFFLVAITFLLFDLEIALLLPLPWATQANTMTPMLTTALVLILLLALGLAYEWLQKGLEWNE</sequence>
<accession>O21332</accession>
<name>NU3M_DASNO</name>
<feature type="chain" id="PRO_0000117732" description="NADH-ubiquinone oxidoreductase chain 3">
    <location>
        <begin position="1"/>
        <end position="115"/>
    </location>
</feature>
<feature type="transmembrane region" description="Helical" evidence="3">
    <location>
        <begin position="3"/>
        <end position="23"/>
    </location>
</feature>
<feature type="transmembrane region" description="Helical" evidence="3">
    <location>
        <begin position="55"/>
        <end position="75"/>
    </location>
</feature>
<feature type="transmembrane region" description="Helical" evidence="3">
    <location>
        <begin position="87"/>
        <end position="107"/>
    </location>
</feature>
<organism>
    <name type="scientific">Dasypus novemcinctus</name>
    <name type="common">Nine-banded armadillo</name>
    <dbReference type="NCBI Taxonomy" id="9361"/>
    <lineage>
        <taxon>Eukaryota</taxon>
        <taxon>Metazoa</taxon>
        <taxon>Chordata</taxon>
        <taxon>Craniata</taxon>
        <taxon>Vertebrata</taxon>
        <taxon>Euteleostomi</taxon>
        <taxon>Mammalia</taxon>
        <taxon>Eutheria</taxon>
        <taxon>Xenarthra</taxon>
        <taxon>Cingulata</taxon>
        <taxon>Dasypodidae</taxon>
        <taxon>Dasypus</taxon>
    </lineage>
</organism>
<evidence type="ECO:0000250" key="1">
    <source>
        <dbReference type="UniProtKB" id="P03897"/>
    </source>
</evidence>
<evidence type="ECO:0000250" key="2">
    <source>
        <dbReference type="UniProtKB" id="P03898"/>
    </source>
</evidence>
<evidence type="ECO:0000255" key="3"/>
<evidence type="ECO:0000305" key="4"/>
<comment type="function">
    <text evidence="1">Core subunit of the mitochondrial membrane respiratory chain NADH dehydrogenase (Complex I) which catalyzes electron transfer from NADH through the respiratory chain, using ubiquinone as an electron acceptor. Essential for the catalytic activity of complex I.</text>
</comment>
<comment type="catalytic activity">
    <reaction evidence="1">
        <text>a ubiquinone + NADH + 5 H(+)(in) = a ubiquinol + NAD(+) + 4 H(+)(out)</text>
        <dbReference type="Rhea" id="RHEA:29091"/>
        <dbReference type="Rhea" id="RHEA-COMP:9565"/>
        <dbReference type="Rhea" id="RHEA-COMP:9566"/>
        <dbReference type="ChEBI" id="CHEBI:15378"/>
        <dbReference type="ChEBI" id="CHEBI:16389"/>
        <dbReference type="ChEBI" id="CHEBI:17976"/>
        <dbReference type="ChEBI" id="CHEBI:57540"/>
        <dbReference type="ChEBI" id="CHEBI:57945"/>
        <dbReference type="EC" id="7.1.1.2"/>
    </reaction>
</comment>
<comment type="subunit">
    <text evidence="1">Core subunit of respiratory chain NADH dehydrogenase (Complex I) which is composed of 45 different subunits. Interacts with TMEM186. Interacts with TMEM242 (By similarity).</text>
</comment>
<comment type="subcellular location">
    <subcellularLocation>
        <location evidence="2">Mitochondrion inner membrane</location>
        <topology evidence="3">Multi-pass membrane protein</topology>
    </subcellularLocation>
</comment>
<comment type="similarity">
    <text evidence="4">Belongs to the complex I subunit 3 family.</text>
</comment>
<protein>
    <recommendedName>
        <fullName evidence="1">NADH-ubiquinone oxidoreductase chain 3</fullName>
        <ecNumber evidence="1">7.1.1.2</ecNumber>
    </recommendedName>
    <alternativeName>
        <fullName>NADH dehydrogenase subunit 3</fullName>
    </alternativeName>
</protein>
<gene>
    <name evidence="1" type="primary">MT-ND3</name>
    <name type="synonym">MTND3</name>
    <name type="synonym">NADH3</name>
    <name type="synonym">ND3</name>
</gene>